<name>PA_I82A4</name>
<reference key="1">
    <citation type="journal article" date="1989" name="Virology">
        <title>Evolutionary pathways of the PA genes of influenza A viruses.</title>
        <authorList>
            <person name="Okazaki K."/>
            <person name="Kawaoka Y."/>
            <person name="Webster R.G."/>
        </authorList>
    </citation>
    <scope>NUCLEOTIDE SEQUENCE [GENOMIC RNA]</scope>
</reference>
<gene>
    <name evidence="2" type="primary">PA</name>
</gene>
<sequence>MEDFVRQCFNPMIVELAEKAMKEYGENPKIETNKFAAICTHLEVCFMYSDFHFIDERGESIIVESGDPNALLKHRFEIIEGRDRTMAWTVVNSICNTTGVEKPKFLPDLYDYKENRFIEIGVTRREVHIYYLEKANKIKSEKTHIHIFSFTGEEMATKADYTLDEESRARIKTRLFTIRQEMASRGLWDSFRQSERGEETVEERFEITGTMRRLADQSLPPNFSSLENFRAYVDGFEPNGCIEGKLSQMSKEVNARIEPFLKTTPRPLRLPDGPPCSQRSKFLLMDALKLSIEDPSHEGEGIPLYDAIKCMKTFFGWKEPNIVKPHEKGINPNYLLAWKQVLAELQDIENEEKIPKTKNMKKTSQLKWALGENMAPEKVDFEDCKDISDLKQYDSDEPEARSLASWIQSEFNKACELTDSSWIELDEIGEDVAPIEHIASIRRNYFTAEVSHCRATEYIMKGVYINTALLNASCAAMDDFQLIPMISKCRTKEGRRKTNLYGFIIKGRSHLRNDTDVVNFVSMEFSLTDPRLEPHKWEKYCVLEIGDMLLRTAIGQVSRPMFLYVRTNGTSKIKMKWGMEMRRCLLQSLQQIESMIEAESSVKEKDMTKEFFENKSETWPIGESPKGVEEGSIGKVCRTLLAKSVFNSLYASPQLEGFSAESRKLLLIVQALRDNLEPGTFDLGGLYEAIEECLINDPWVLLNASWFNSFLTHALK</sequence>
<feature type="chain" id="PRO_0000078803" description="Polymerase acidic protein">
    <location>
        <begin position="1"/>
        <end position="716"/>
    </location>
</feature>
<feature type="short sequence motif" description="Nuclear localization signal 1 (NLS1)" evidence="1 2">
    <location>
        <begin position="124"/>
        <end position="139"/>
    </location>
</feature>
<feature type="short sequence motif" description="Nuclear localization signal 2 (NLS2)" evidence="1 2">
    <location>
        <begin position="184"/>
        <end position="247"/>
    </location>
</feature>
<feature type="binding site" evidence="2">
    <location>
        <position position="41"/>
    </location>
    <ligand>
        <name>Mn(2+)</name>
        <dbReference type="ChEBI" id="CHEBI:29035"/>
        <label>1</label>
    </ligand>
</feature>
<feature type="binding site" evidence="2">
    <location>
        <position position="80"/>
    </location>
    <ligand>
        <name>Mn(2+)</name>
        <dbReference type="ChEBI" id="CHEBI:29035"/>
        <label>2</label>
    </ligand>
</feature>
<feature type="binding site" evidence="2">
    <location>
        <position position="108"/>
    </location>
    <ligand>
        <name>Mn(2+)</name>
        <dbReference type="ChEBI" id="CHEBI:29035"/>
        <label>1</label>
    </ligand>
</feature>
<feature type="binding site" evidence="2">
    <location>
        <position position="108"/>
    </location>
    <ligand>
        <name>Mn(2+)</name>
        <dbReference type="ChEBI" id="CHEBI:29035"/>
        <label>2</label>
    </ligand>
</feature>
<feature type="binding site" evidence="2">
    <location>
        <position position="119"/>
    </location>
    <ligand>
        <name>Mn(2+)</name>
        <dbReference type="ChEBI" id="CHEBI:29035"/>
        <label>1</label>
    </ligand>
</feature>
<feature type="binding site" evidence="2">
    <location>
        <position position="120"/>
    </location>
    <ligand>
        <name>Mn(2+)</name>
        <dbReference type="ChEBI" id="CHEBI:29035"/>
        <label>1</label>
    </ligand>
</feature>
<accession>P13174</accession>
<evidence type="ECO:0000250" key="1">
    <source>
        <dbReference type="UniProtKB" id="P03433"/>
    </source>
</evidence>
<evidence type="ECO:0000255" key="2">
    <source>
        <dbReference type="HAMAP-Rule" id="MF_04063"/>
    </source>
</evidence>
<keyword id="KW-1157">Cap snatching</keyword>
<keyword id="KW-0255">Endonuclease</keyword>
<keyword id="KW-1262">Eukaryotic host gene expression shutoff by virus</keyword>
<keyword id="KW-1191">Eukaryotic host transcription shutoff by virus</keyword>
<keyword id="KW-1035">Host cytoplasm</keyword>
<keyword id="KW-1190">Host gene expression shutoff by virus</keyword>
<keyword id="KW-1048">Host nucleus</keyword>
<keyword id="KW-0945">Host-virus interaction</keyword>
<keyword id="KW-0378">Hydrolase</keyword>
<keyword id="KW-1104">Inhibition of host RNA polymerase II by virus</keyword>
<keyword id="KW-0464">Manganese</keyword>
<keyword id="KW-0479">Metal-binding</keyword>
<keyword id="KW-0540">Nuclease</keyword>
<keyword id="KW-0597">Phosphoprotein</keyword>
<keyword id="KW-0688">Ribosomal frameshifting</keyword>
<dbReference type="EC" id="3.1.-.-" evidence="2"/>
<dbReference type="EMBL" id="M26081">
    <property type="protein sequence ID" value="AAA43671.1"/>
    <property type="molecule type" value="Genomic_RNA"/>
</dbReference>
<dbReference type="SMR" id="P13174"/>
<dbReference type="MEROPS" id="S62.001"/>
<dbReference type="GO" id="GO:0030430">
    <property type="term" value="C:host cell cytoplasm"/>
    <property type="evidence" value="ECO:0007669"/>
    <property type="project" value="UniProtKB-SubCell"/>
</dbReference>
<dbReference type="GO" id="GO:0042025">
    <property type="term" value="C:host cell nucleus"/>
    <property type="evidence" value="ECO:0007669"/>
    <property type="project" value="UniProtKB-SubCell"/>
</dbReference>
<dbReference type="GO" id="GO:0004519">
    <property type="term" value="F:endonuclease activity"/>
    <property type="evidence" value="ECO:0007669"/>
    <property type="project" value="UniProtKB-KW"/>
</dbReference>
<dbReference type="GO" id="GO:0046872">
    <property type="term" value="F:metal ion binding"/>
    <property type="evidence" value="ECO:0007669"/>
    <property type="project" value="UniProtKB-KW"/>
</dbReference>
<dbReference type="GO" id="GO:0003723">
    <property type="term" value="F:RNA binding"/>
    <property type="evidence" value="ECO:0007669"/>
    <property type="project" value="UniProtKB-UniRule"/>
</dbReference>
<dbReference type="GO" id="GO:0075526">
    <property type="term" value="P:cap snatching"/>
    <property type="evidence" value="ECO:0007669"/>
    <property type="project" value="UniProtKB-UniRule"/>
</dbReference>
<dbReference type="GO" id="GO:0006351">
    <property type="term" value="P:DNA-templated transcription"/>
    <property type="evidence" value="ECO:0007669"/>
    <property type="project" value="UniProtKB-UniRule"/>
</dbReference>
<dbReference type="GO" id="GO:0039657">
    <property type="term" value="P:symbiont-mediated suppression of host gene expression"/>
    <property type="evidence" value="ECO:0007669"/>
    <property type="project" value="UniProtKB-KW"/>
</dbReference>
<dbReference type="GO" id="GO:0039523">
    <property type="term" value="P:symbiont-mediated suppression of host mRNA transcription via inhibition of RNA polymerase II activity"/>
    <property type="evidence" value="ECO:0007669"/>
    <property type="project" value="UniProtKB-UniRule"/>
</dbReference>
<dbReference type="GO" id="GO:0039694">
    <property type="term" value="P:viral RNA genome replication"/>
    <property type="evidence" value="ECO:0007669"/>
    <property type="project" value="InterPro"/>
</dbReference>
<dbReference type="GO" id="GO:0075523">
    <property type="term" value="P:viral translational frameshifting"/>
    <property type="evidence" value="ECO:0007669"/>
    <property type="project" value="UniProtKB-KW"/>
</dbReference>
<dbReference type="FunFam" id="3.40.91.90:FF:000001">
    <property type="entry name" value="Polymerase acidic protein"/>
    <property type="match status" value="1"/>
</dbReference>
<dbReference type="Gene3D" id="3.40.91.90">
    <property type="entry name" value="Influenza RNA-dependent RNA polymerase subunit PA, endonuclease domain"/>
    <property type="match status" value="1"/>
</dbReference>
<dbReference type="HAMAP" id="MF_04063">
    <property type="entry name" value="INFV_PA"/>
    <property type="match status" value="1"/>
</dbReference>
<dbReference type="InterPro" id="IPR037534">
    <property type="entry name" value="INFV_PA"/>
</dbReference>
<dbReference type="InterPro" id="IPR001009">
    <property type="entry name" value="PA/PA-X"/>
</dbReference>
<dbReference type="InterPro" id="IPR038372">
    <property type="entry name" value="PA/PA-X_sf"/>
</dbReference>
<dbReference type="Pfam" id="PF00603">
    <property type="entry name" value="Flu_PA"/>
    <property type="match status" value="1"/>
</dbReference>
<organismHost>
    <name type="scientific">Aves</name>
    <dbReference type="NCBI Taxonomy" id="8782"/>
</organismHost>
<organismHost>
    <name type="scientific">Cetacea</name>
    <name type="common">whales</name>
    <dbReference type="NCBI Taxonomy" id="9721"/>
</organismHost>
<organismHost>
    <name type="scientific">Homo sapiens</name>
    <name type="common">Human</name>
    <dbReference type="NCBI Taxonomy" id="9606"/>
</organismHost>
<organismHost>
    <name type="scientific">Phocidae</name>
    <name type="common">true seals</name>
    <dbReference type="NCBI Taxonomy" id="9709"/>
</organismHost>
<organismHost>
    <name type="scientific">Sus scrofa</name>
    <name type="common">Pig</name>
    <dbReference type="NCBI Taxonomy" id="9823"/>
</organismHost>
<comment type="function">
    <text evidence="2">Plays an essential role in viral RNA transcription and replication by forming the heterotrimeric polymerase complex together with PB1 and PB2 subunits. The complex transcribes viral mRNAs by using a unique mechanism called cap-snatching. It consists in the hijacking and cleavage of host capped pre-mRNAs. These short capped RNAs are then used as primers for viral mRNAs. The PB2 subunit is responsible for the binding of the 5' cap of cellular pre-mRNAs which are subsequently cleaved after 10-13 nucleotides by the PA subunit that carries the endonuclease activity.</text>
</comment>
<comment type="cofactor">
    <cofactor evidence="2">
        <name>Mn(2+)</name>
        <dbReference type="ChEBI" id="CHEBI:29035"/>
    </cofactor>
    <text evidence="2">Binds 2 manganese ions per subunit.</text>
</comment>
<comment type="subunit">
    <text evidence="1 2">Influenza RNA polymerase is composed of three subunits: PB1, PB2 and PA. Interacts (via C-terminus) with PB1 (via N-terminus).</text>
</comment>
<comment type="subcellular location">
    <subcellularLocation>
        <location evidence="2">Host cytoplasm</location>
    </subcellularLocation>
    <subcellularLocation>
        <location evidence="2">Host nucleus</location>
    </subcellularLocation>
    <text evidence="1 2">PB1 and PA are transported in the host nucleus as a complex.</text>
</comment>
<comment type="alternative products">
    <event type="ribosomal frameshifting"/>
    <isoform>
        <id>P13174-1</id>
        <name>PA</name>
        <sequence type="displayed"/>
    </isoform>
    <isoform>
        <id>P0DJU8-1</id>
        <name>PA-X</name>
        <sequence type="external"/>
    </isoform>
</comment>
<comment type="PTM">
    <text evidence="1 2">Phosphorylated on serines and threonines by host kinases, including human casein kinase II.</text>
</comment>
<comment type="similarity">
    <text evidence="2">Belongs to the influenza viruses PA family.</text>
</comment>
<proteinExistence type="inferred from homology"/>
<organism>
    <name type="scientific">Influenza A virus (strain A/Swine/Hong Kong/126/1982 H3N2)</name>
    <dbReference type="NCBI Taxonomy" id="382848"/>
    <lineage>
        <taxon>Viruses</taxon>
        <taxon>Riboviria</taxon>
        <taxon>Orthornavirae</taxon>
        <taxon>Negarnaviricota</taxon>
        <taxon>Polyploviricotina</taxon>
        <taxon>Insthoviricetes</taxon>
        <taxon>Articulavirales</taxon>
        <taxon>Orthomyxoviridae</taxon>
        <taxon>Alphainfluenzavirus</taxon>
        <taxon>Alphainfluenzavirus influenzae</taxon>
        <taxon>Influenza A virus</taxon>
    </lineage>
</organism>
<protein>
    <recommendedName>
        <fullName evidence="2">Polymerase acidic protein</fullName>
        <ecNumber evidence="2">3.1.-.-</ecNumber>
    </recommendedName>
    <alternativeName>
        <fullName evidence="2">RNA-directed RNA polymerase subunit P2</fullName>
    </alternativeName>
</protein>